<feature type="chain" id="PRO_0000139882" description="Ribonuclease PH">
    <location>
        <begin position="1"/>
        <end position="248"/>
    </location>
</feature>
<feature type="binding site" evidence="1">
    <location>
        <position position="86"/>
    </location>
    <ligand>
        <name>phosphate</name>
        <dbReference type="ChEBI" id="CHEBI:43474"/>
        <note>substrate</note>
    </ligand>
</feature>
<feature type="binding site" evidence="1">
    <location>
        <begin position="124"/>
        <end position="126"/>
    </location>
    <ligand>
        <name>phosphate</name>
        <dbReference type="ChEBI" id="CHEBI:43474"/>
        <note>substrate</note>
    </ligand>
</feature>
<evidence type="ECO:0000255" key="1">
    <source>
        <dbReference type="HAMAP-Rule" id="MF_00564"/>
    </source>
</evidence>
<reference key="1">
    <citation type="journal article" date="2002" name="Proc. Natl. Acad. Sci. U.S.A.">
        <title>Complete genome sequence of Clostridium perfringens, an anaerobic flesh-eater.</title>
        <authorList>
            <person name="Shimizu T."/>
            <person name="Ohtani K."/>
            <person name="Hirakawa H."/>
            <person name="Ohshima K."/>
            <person name="Yamashita A."/>
            <person name="Shiba T."/>
            <person name="Ogasawara N."/>
            <person name="Hattori M."/>
            <person name="Kuhara S."/>
            <person name="Hayashi H."/>
        </authorList>
    </citation>
    <scope>NUCLEOTIDE SEQUENCE [LARGE SCALE GENOMIC DNA]</scope>
    <source>
        <strain>13 / Type A</strain>
    </source>
</reference>
<comment type="function">
    <text evidence="1">Phosphorolytic 3'-5' exoribonuclease that plays an important role in tRNA 3'-end maturation. Removes nucleotide residues following the 3'-CCA terminus of tRNAs; can also add nucleotides to the ends of RNA molecules by using nucleoside diphosphates as substrates, but this may not be physiologically important. Probably plays a role in initiation of 16S rRNA degradation (leading to ribosome degradation) during starvation.</text>
</comment>
<comment type="catalytic activity">
    <reaction evidence="1">
        <text>tRNA(n+1) + phosphate = tRNA(n) + a ribonucleoside 5'-diphosphate</text>
        <dbReference type="Rhea" id="RHEA:10628"/>
        <dbReference type="Rhea" id="RHEA-COMP:17343"/>
        <dbReference type="Rhea" id="RHEA-COMP:17344"/>
        <dbReference type="ChEBI" id="CHEBI:43474"/>
        <dbReference type="ChEBI" id="CHEBI:57930"/>
        <dbReference type="ChEBI" id="CHEBI:173114"/>
        <dbReference type="EC" id="2.7.7.56"/>
    </reaction>
</comment>
<comment type="subunit">
    <text evidence="1">Homohexameric ring arranged as a trimer of dimers.</text>
</comment>
<comment type="similarity">
    <text evidence="1">Belongs to the RNase PH family.</text>
</comment>
<keyword id="KW-0548">Nucleotidyltransferase</keyword>
<keyword id="KW-1185">Reference proteome</keyword>
<keyword id="KW-0694">RNA-binding</keyword>
<keyword id="KW-0698">rRNA processing</keyword>
<keyword id="KW-0808">Transferase</keyword>
<keyword id="KW-0819">tRNA processing</keyword>
<keyword id="KW-0820">tRNA-binding</keyword>
<proteinExistence type="inferred from homology"/>
<name>RNPH_CLOPE</name>
<dbReference type="EC" id="2.7.7.56" evidence="1"/>
<dbReference type="EMBL" id="BA000016">
    <property type="protein sequence ID" value="BAB81960.1"/>
    <property type="molecule type" value="Genomic_DNA"/>
</dbReference>
<dbReference type="RefSeq" id="WP_003454266.1">
    <property type="nucleotide sequence ID" value="NC_003366.1"/>
</dbReference>
<dbReference type="SMR" id="Q8XI67"/>
<dbReference type="STRING" id="195102.gene:10491562"/>
<dbReference type="KEGG" id="cpe:CPE2254"/>
<dbReference type="HOGENOM" id="CLU_050858_0_0_9"/>
<dbReference type="Proteomes" id="UP000000818">
    <property type="component" value="Chromosome"/>
</dbReference>
<dbReference type="GO" id="GO:0000175">
    <property type="term" value="F:3'-5'-RNA exonuclease activity"/>
    <property type="evidence" value="ECO:0007669"/>
    <property type="project" value="UniProtKB-UniRule"/>
</dbReference>
<dbReference type="GO" id="GO:0000049">
    <property type="term" value="F:tRNA binding"/>
    <property type="evidence" value="ECO:0007669"/>
    <property type="project" value="UniProtKB-UniRule"/>
</dbReference>
<dbReference type="GO" id="GO:0009022">
    <property type="term" value="F:tRNA nucleotidyltransferase activity"/>
    <property type="evidence" value="ECO:0007669"/>
    <property type="project" value="UniProtKB-UniRule"/>
</dbReference>
<dbReference type="GO" id="GO:0016075">
    <property type="term" value="P:rRNA catabolic process"/>
    <property type="evidence" value="ECO:0007669"/>
    <property type="project" value="UniProtKB-UniRule"/>
</dbReference>
<dbReference type="GO" id="GO:0006364">
    <property type="term" value="P:rRNA processing"/>
    <property type="evidence" value="ECO:0007669"/>
    <property type="project" value="UniProtKB-KW"/>
</dbReference>
<dbReference type="GO" id="GO:0008033">
    <property type="term" value="P:tRNA processing"/>
    <property type="evidence" value="ECO:0007669"/>
    <property type="project" value="UniProtKB-UniRule"/>
</dbReference>
<dbReference type="CDD" id="cd11362">
    <property type="entry name" value="RNase_PH_bact"/>
    <property type="match status" value="1"/>
</dbReference>
<dbReference type="FunFam" id="3.30.230.70:FF:000003">
    <property type="entry name" value="Ribonuclease PH"/>
    <property type="match status" value="1"/>
</dbReference>
<dbReference type="Gene3D" id="3.30.230.70">
    <property type="entry name" value="GHMP Kinase, N-terminal domain"/>
    <property type="match status" value="1"/>
</dbReference>
<dbReference type="HAMAP" id="MF_00564">
    <property type="entry name" value="RNase_PH"/>
    <property type="match status" value="1"/>
</dbReference>
<dbReference type="InterPro" id="IPR001247">
    <property type="entry name" value="ExoRNase_PH_dom1"/>
</dbReference>
<dbReference type="InterPro" id="IPR015847">
    <property type="entry name" value="ExoRNase_PH_dom2"/>
</dbReference>
<dbReference type="InterPro" id="IPR036345">
    <property type="entry name" value="ExoRNase_PH_dom2_sf"/>
</dbReference>
<dbReference type="InterPro" id="IPR027408">
    <property type="entry name" value="PNPase/RNase_PH_dom_sf"/>
</dbReference>
<dbReference type="InterPro" id="IPR020568">
    <property type="entry name" value="Ribosomal_Su5_D2-typ_SF"/>
</dbReference>
<dbReference type="InterPro" id="IPR050080">
    <property type="entry name" value="RNase_PH"/>
</dbReference>
<dbReference type="InterPro" id="IPR002381">
    <property type="entry name" value="RNase_PH_bac-type"/>
</dbReference>
<dbReference type="InterPro" id="IPR018336">
    <property type="entry name" value="RNase_PH_CS"/>
</dbReference>
<dbReference type="NCBIfam" id="TIGR01966">
    <property type="entry name" value="RNasePH"/>
    <property type="match status" value="1"/>
</dbReference>
<dbReference type="PANTHER" id="PTHR11953">
    <property type="entry name" value="EXOSOME COMPLEX COMPONENT"/>
    <property type="match status" value="1"/>
</dbReference>
<dbReference type="PANTHER" id="PTHR11953:SF0">
    <property type="entry name" value="EXOSOME COMPLEX COMPONENT RRP41"/>
    <property type="match status" value="1"/>
</dbReference>
<dbReference type="Pfam" id="PF01138">
    <property type="entry name" value="RNase_PH"/>
    <property type="match status" value="1"/>
</dbReference>
<dbReference type="Pfam" id="PF03725">
    <property type="entry name" value="RNase_PH_C"/>
    <property type="match status" value="1"/>
</dbReference>
<dbReference type="SUPFAM" id="SSF55666">
    <property type="entry name" value="Ribonuclease PH domain 2-like"/>
    <property type="match status" value="1"/>
</dbReference>
<dbReference type="SUPFAM" id="SSF54211">
    <property type="entry name" value="Ribosomal protein S5 domain 2-like"/>
    <property type="match status" value="1"/>
</dbReference>
<dbReference type="PROSITE" id="PS01277">
    <property type="entry name" value="RIBONUCLEASE_PH"/>
    <property type="match status" value="1"/>
</dbReference>
<gene>
    <name evidence="1" type="primary">rph</name>
    <name type="synonym">rnpH</name>
    <name type="ordered locus">CPE2254</name>
</gene>
<organism>
    <name type="scientific">Clostridium perfringens (strain 13 / Type A)</name>
    <dbReference type="NCBI Taxonomy" id="195102"/>
    <lineage>
        <taxon>Bacteria</taxon>
        <taxon>Bacillati</taxon>
        <taxon>Bacillota</taxon>
        <taxon>Clostridia</taxon>
        <taxon>Eubacteriales</taxon>
        <taxon>Clostridiaceae</taxon>
        <taxon>Clostridium</taxon>
    </lineage>
</organism>
<sequence length="248" mass="27629">MRSSGRKKEQIRPVKITRNFTKYAEGSVLIEVGDTKVLCTASIEEKVPPFLKGSGEGWITAEYNMLPRSTQSRKQRDINKLKIDGRTMEIQRLIGRALRSAVDMKALGEKTIWIDCDVLQADGGTRTTSITGSFVALVDAVNKLHQKKPFNVYPIRHFVSAVSVGIVGEEKILDLCYEEDHVAKVDMNVVMTEEGEFIEIQGTGEAGPFSRKELDELLNLAEKGAKQMIQAQKDALKTDSLWIGTGRE</sequence>
<protein>
    <recommendedName>
        <fullName evidence="1">Ribonuclease PH</fullName>
        <shortName evidence="1">RNase PH</shortName>
        <ecNumber evidence="1">2.7.7.56</ecNumber>
    </recommendedName>
    <alternativeName>
        <fullName evidence="1">tRNA nucleotidyltransferase</fullName>
    </alternativeName>
</protein>
<accession>Q8XI67</accession>